<reference key="1">
    <citation type="journal article" date="2004" name="Science">
        <title>Illuminating the evolutionary history of chlamydiae.</title>
        <authorList>
            <person name="Horn M."/>
            <person name="Collingro A."/>
            <person name="Schmitz-Esser S."/>
            <person name="Beier C.L."/>
            <person name="Purkhold U."/>
            <person name="Fartmann B."/>
            <person name="Brandt P."/>
            <person name="Nyakatura G.J."/>
            <person name="Droege M."/>
            <person name="Frishman D."/>
            <person name="Rattei T."/>
            <person name="Mewes H.-W."/>
            <person name="Wagner M."/>
        </authorList>
    </citation>
    <scope>NUCLEOTIDE SEQUENCE [LARGE SCALE GENOMIC DNA]</scope>
    <source>
        <strain>UWE25</strain>
    </source>
</reference>
<proteinExistence type="inferred from homology"/>
<dbReference type="EC" id="2.7.7.7" evidence="1"/>
<dbReference type="EMBL" id="BX908798">
    <property type="protein sequence ID" value="CAF24544.1"/>
    <property type="molecule type" value="Genomic_DNA"/>
</dbReference>
<dbReference type="RefSeq" id="WP_011176365.1">
    <property type="nucleotide sequence ID" value="NC_005861.2"/>
</dbReference>
<dbReference type="SMR" id="Q6MA55"/>
<dbReference type="STRING" id="264201.pc1820"/>
<dbReference type="KEGG" id="pcu:PC_RS08725"/>
<dbReference type="eggNOG" id="COG0389">
    <property type="taxonomic scope" value="Bacteria"/>
</dbReference>
<dbReference type="HOGENOM" id="CLU_012348_1_2_0"/>
<dbReference type="OrthoDB" id="9808813at2"/>
<dbReference type="Proteomes" id="UP000000529">
    <property type="component" value="Chromosome"/>
</dbReference>
<dbReference type="GO" id="GO:0005829">
    <property type="term" value="C:cytosol"/>
    <property type="evidence" value="ECO:0007669"/>
    <property type="project" value="TreeGrafter"/>
</dbReference>
<dbReference type="GO" id="GO:0003684">
    <property type="term" value="F:damaged DNA binding"/>
    <property type="evidence" value="ECO:0007669"/>
    <property type="project" value="InterPro"/>
</dbReference>
<dbReference type="GO" id="GO:0003887">
    <property type="term" value="F:DNA-directed DNA polymerase activity"/>
    <property type="evidence" value="ECO:0007669"/>
    <property type="project" value="UniProtKB-UniRule"/>
</dbReference>
<dbReference type="GO" id="GO:0000287">
    <property type="term" value="F:magnesium ion binding"/>
    <property type="evidence" value="ECO:0007669"/>
    <property type="project" value="UniProtKB-UniRule"/>
</dbReference>
<dbReference type="GO" id="GO:0006261">
    <property type="term" value="P:DNA-templated DNA replication"/>
    <property type="evidence" value="ECO:0007669"/>
    <property type="project" value="UniProtKB-UniRule"/>
</dbReference>
<dbReference type="GO" id="GO:0042276">
    <property type="term" value="P:error-prone translesion synthesis"/>
    <property type="evidence" value="ECO:0007669"/>
    <property type="project" value="TreeGrafter"/>
</dbReference>
<dbReference type="GO" id="GO:0009432">
    <property type="term" value="P:SOS response"/>
    <property type="evidence" value="ECO:0007669"/>
    <property type="project" value="TreeGrafter"/>
</dbReference>
<dbReference type="CDD" id="cd03586">
    <property type="entry name" value="PolY_Pol_IV_kappa"/>
    <property type="match status" value="1"/>
</dbReference>
<dbReference type="FunFam" id="3.40.1170.60:FF:000001">
    <property type="entry name" value="DNA polymerase IV"/>
    <property type="match status" value="1"/>
</dbReference>
<dbReference type="Gene3D" id="3.30.70.270">
    <property type="match status" value="1"/>
</dbReference>
<dbReference type="Gene3D" id="3.40.1170.60">
    <property type="match status" value="1"/>
</dbReference>
<dbReference type="Gene3D" id="1.10.150.20">
    <property type="entry name" value="5' to 3' exonuclease, C-terminal subdomain"/>
    <property type="match status" value="1"/>
</dbReference>
<dbReference type="Gene3D" id="3.30.1490.100">
    <property type="entry name" value="DNA polymerase, Y-family, little finger domain"/>
    <property type="match status" value="1"/>
</dbReference>
<dbReference type="HAMAP" id="MF_01113">
    <property type="entry name" value="DNApol_IV"/>
    <property type="match status" value="1"/>
</dbReference>
<dbReference type="InterPro" id="IPR043502">
    <property type="entry name" value="DNA/RNA_pol_sf"/>
</dbReference>
<dbReference type="InterPro" id="IPR036775">
    <property type="entry name" value="DNA_pol_Y-fam_lit_finger_sf"/>
</dbReference>
<dbReference type="InterPro" id="IPR017961">
    <property type="entry name" value="DNA_pol_Y-fam_little_finger"/>
</dbReference>
<dbReference type="InterPro" id="IPR050116">
    <property type="entry name" value="DNA_polymerase-Y"/>
</dbReference>
<dbReference type="InterPro" id="IPR022880">
    <property type="entry name" value="DNApol_IV"/>
</dbReference>
<dbReference type="InterPro" id="IPR053848">
    <property type="entry name" value="IMS_HHH_1"/>
</dbReference>
<dbReference type="InterPro" id="IPR043128">
    <property type="entry name" value="Rev_trsase/Diguanyl_cyclase"/>
</dbReference>
<dbReference type="InterPro" id="IPR001126">
    <property type="entry name" value="UmuC"/>
</dbReference>
<dbReference type="NCBIfam" id="NF002677">
    <property type="entry name" value="PRK02406.1"/>
    <property type="match status" value="1"/>
</dbReference>
<dbReference type="PANTHER" id="PTHR11076:SF33">
    <property type="entry name" value="DNA POLYMERASE KAPPA"/>
    <property type="match status" value="1"/>
</dbReference>
<dbReference type="PANTHER" id="PTHR11076">
    <property type="entry name" value="DNA REPAIR POLYMERASE UMUC / TRANSFERASE FAMILY MEMBER"/>
    <property type="match status" value="1"/>
</dbReference>
<dbReference type="Pfam" id="PF00817">
    <property type="entry name" value="IMS"/>
    <property type="match status" value="1"/>
</dbReference>
<dbReference type="Pfam" id="PF11799">
    <property type="entry name" value="IMS_C"/>
    <property type="match status" value="1"/>
</dbReference>
<dbReference type="Pfam" id="PF21999">
    <property type="entry name" value="IMS_HHH_1"/>
    <property type="match status" value="1"/>
</dbReference>
<dbReference type="SUPFAM" id="SSF56672">
    <property type="entry name" value="DNA/RNA polymerases"/>
    <property type="match status" value="1"/>
</dbReference>
<dbReference type="SUPFAM" id="SSF100879">
    <property type="entry name" value="Lesion bypass DNA polymerase (Y-family), little finger domain"/>
    <property type="match status" value="1"/>
</dbReference>
<dbReference type="PROSITE" id="PS50173">
    <property type="entry name" value="UMUC"/>
    <property type="match status" value="1"/>
</dbReference>
<organism>
    <name type="scientific">Protochlamydia amoebophila (strain UWE25)</name>
    <dbReference type="NCBI Taxonomy" id="264201"/>
    <lineage>
        <taxon>Bacteria</taxon>
        <taxon>Pseudomonadati</taxon>
        <taxon>Chlamydiota</taxon>
        <taxon>Chlamydiia</taxon>
        <taxon>Parachlamydiales</taxon>
        <taxon>Parachlamydiaceae</taxon>
        <taxon>Candidatus Protochlamydia</taxon>
    </lineage>
</organism>
<feature type="chain" id="PRO_1000084905" description="DNA polymerase IV">
    <location>
        <begin position="1"/>
        <end position="350"/>
    </location>
</feature>
<feature type="domain" description="UmuC" evidence="1">
    <location>
        <begin position="6"/>
        <end position="187"/>
    </location>
</feature>
<feature type="active site" evidence="1">
    <location>
        <position position="106"/>
    </location>
</feature>
<feature type="binding site" evidence="1">
    <location>
        <position position="10"/>
    </location>
    <ligand>
        <name>Mg(2+)</name>
        <dbReference type="ChEBI" id="CHEBI:18420"/>
    </ligand>
</feature>
<feature type="binding site" evidence="1">
    <location>
        <position position="105"/>
    </location>
    <ligand>
        <name>Mg(2+)</name>
        <dbReference type="ChEBI" id="CHEBI:18420"/>
    </ligand>
</feature>
<feature type="site" description="Substrate discrimination" evidence="1">
    <location>
        <position position="15"/>
    </location>
</feature>
<accession>Q6MA55</accession>
<keyword id="KW-0963">Cytoplasm</keyword>
<keyword id="KW-0227">DNA damage</keyword>
<keyword id="KW-0234">DNA repair</keyword>
<keyword id="KW-0235">DNA replication</keyword>
<keyword id="KW-0238">DNA-binding</keyword>
<keyword id="KW-0239">DNA-directed DNA polymerase</keyword>
<keyword id="KW-0460">Magnesium</keyword>
<keyword id="KW-0479">Metal-binding</keyword>
<keyword id="KW-0515">Mutator protein</keyword>
<keyword id="KW-0548">Nucleotidyltransferase</keyword>
<keyword id="KW-1185">Reference proteome</keyword>
<keyword id="KW-0808">Transferase</keyword>
<sequence>MTLRKIIHIDMDAFYASVEMRDDPSLVLKPIAVGGDPDKRGVIATANYLARKFGVRSAMPSWKAKQLCPDLIILFPDFDKYKRESKAIHEIFHLFTDLIEPLSLDEAFLDVTDVDALRGSATWIAQEIRQLIWKERGLTASAGVAPNKFLAKVASDWHKPNGQFVLTPKEVDAFMVHLPVEKIFGIGHVMAKKLHSLGLMNCGDLQTLDITTLQKLFGSRAWNLYELCRGIDHRFVISDRIRKSLSVESTFLEDLNNLELCYQEIPNLIERLMIRYEKISNQYYKKKPFIKIKFADFTTTTVENTFFKAFDLETYQTLIRIGWERKKAPVRLLGLGMSLSLEEEIQLTLF</sequence>
<gene>
    <name evidence="1" type="primary">dinB</name>
    <name type="ordered locus">pc1820</name>
</gene>
<name>DPO4_PARUW</name>
<comment type="function">
    <text evidence="1">Poorly processive, error-prone DNA polymerase involved in untargeted mutagenesis. Copies undamaged DNA at stalled replication forks, which arise in vivo from mismatched or misaligned primer ends. These misaligned primers can be extended by PolIV. Exhibits no 3'-5' exonuclease (proofreading) activity. May be involved in translesional synthesis, in conjunction with the beta clamp from PolIII.</text>
</comment>
<comment type="catalytic activity">
    <reaction evidence="1">
        <text>DNA(n) + a 2'-deoxyribonucleoside 5'-triphosphate = DNA(n+1) + diphosphate</text>
        <dbReference type="Rhea" id="RHEA:22508"/>
        <dbReference type="Rhea" id="RHEA-COMP:17339"/>
        <dbReference type="Rhea" id="RHEA-COMP:17340"/>
        <dbReference type="ChEBI" id="CHEBI:33019"/>
        <dbReference type="ChEBI" id="CHEBI:61560"/>
        <dbReference type="ChEBI" id="CHEBI:173112"/>
        <dbReference type="EC" id="2.7.7.7"/>
    </reaction>
</comment>
<comment type="cofactor">
    <cofactor evidence="1">
        <name>Mg(2+)</name>
        <dbReference type="ChEBI" id="CHEBI:18420"/>
    </cofactor>
    <text evidence="1">Binds 2 magnesium ions per subunit.</text>
</comment>
<comment type="subunit">
    <text evidence="1">Monomer.</text>
</comment>
<comment type="subcellular location">
    <subcellularLocation>
        <location evidence="1">Cytoplasm</location>
    </subcellularLocation>
</comment>
<comment type="similarity">
    <text evidence="1">Belongs to the DNA polymerase type-Y family.</text>
</comment>
<evidence type="ECO:0000255" key="1">
    <source>
        <dbReference type="HAMAP-Rule" id="MF_01113"/>
    </source>
</evidence>
<protein>
    <recommendedName>
        <fullName evidence="1">DNA polymerase IV</fullName>
        <shortName evidence="1">Pol IV</shortName>
        <ecNumber evidence="1">2.7.7.7</ecNumber>
    </recommendedName>
</protein>